<evidence type="ECO:0000250" key="1"/>
<evidence type="ECO:0000255" key="2"/>
<evidence type="ECO:0000305" key="3"/>
<dbReference type="EMBL" id="AC120508">
    <property type="protein sequence ID" value="AAO38486.1"/>
    <property type="molecule type" value="Genomic_DNA"/>
</dbReference>
<dbReference type="EMBL" id="DP000009">
    <property type="protein sequence ID" value="ABF98324.1"/>
    <property type="molecule type" value="Genomic_DNA"/>
</dbReference>
<dbReference type="EMBL" id="AP008209">
    <property type="protein sequence ID" value="BAF12879.1"/>
    <property type="molecule type" value="Genomic_DNA"/>
</dbReference>
<dbReference type="EMBL" id="AP014959">
    <property type="protein sequence ID" value="BAS85863.1"/>
    <property type="molecule type" value="Genomic_DNA"/>
</dbReference>
<dbReference type="EMBL" id="CM000140">
    <property type="protein sequence ID" value="EAZ28221.1"/>
    <property type="molecule type" value="Genomic_DNA"/>
</dbReference>
<dbReference type="EMBL" id="AK103716">
    <property type="protein sequence ID" value="BAG96224.1"/>
    <property type="molecule type" value="mRNA"/>
</dbReference>
<dbReference type="EMBL" id="EU374216">
    <property type="protein sequence ID" value="ABY61037.1"/>
    <property type="molecule type" value="Genomic_DNA"/>
</dbReference>
<dbReference type="RefSeq" id="XP_015629955.1">
    <property type="nucleotide sequence ID" value="XM_015774469.1"/>
</dbReference>
<dbReference type="SMR" id="Q851J8"/>
<dbReference type="FunCoup" id="Q851J8">
    <property type="interactions" value="42"/>
</dbReference>
<dbReference type="STRING" id="39947.Q851J8"/>
<dbReference type="PaxDb" id="39947-Q851J8"/>
<dbReference type="EnsemblPlants" id="Os03t0693700-01">
    <property type="protein sequence ID" value="Os03t0693700-01"/>
    <property type="gene ID" value="Os03g0693700"/>
</dbReference>
<dbReference type="Gramene" id="Os03t0693700-01">
    <property type="protein sequence ID" value="Os03t0693700-01"/>
    <property type="gene ID" value="Os03g0693700"/>
</dbReference>
<dbReference type="KEGG" id="dosa:Os03g0693700"/>
<dbReference type="eggNOG" id="ENOG502QSRM">
    <property type="taxonomic scope" value="Eukaryota"/>
</dbReference>
<dbReference type="HOGENOM" id="CLU_015790_0_0_1"/>
<dbReference type="InParanoid" id="Q851J8"/>
<dbReference type="OMA" id="NGYPCQP"/>
<dbReference type="OrthoDB" id="635918at2759"/>
<dbReference type="Proteomes" id="UP000000763">
    <property type="component" value="Chromosome 3"/>
</dbReference>
<dbReference type="Proteomes" id="UP000007752">
    <property type="component" value="Chromosome 3"/>
</dbReference>
<dbReference type="Proteomes" id="UP000059680">
    <property type="component" value="Chromosome 3"/>
</dbReference>
<dbReference type="GO" id="GO:0048046">
    <property type="term" value="C:apoplast"/>
    <property type="evidence" value="ECO:0007669"/>
    <property type="project" value="UniProtKB-SubCell"/>
</dbReference>
<dbReference type="GO" id="GO:0030145">
    <property type="term" value="F:manganese ion binding"/>
    <property type="evidence" value="ECO:0007669"/>
    <property type="project" value="InterPro"/>
</dbReference>
<dbReference type="CDD" id="cd02241">
    <property type="entry name" value="cupin_OxOx"/>
    <property type="match status" value="1"/>
</dbReference>
<dbReference type="FunFam" id="2.60.120.10:FF:000005">
    <property type="entry name" value="Germin-like protein subfamily 1 member 8"/>
    <property type="match status" value="1"/>
</dbReference>
<dbReference type="Gene3D" id="2.60.120.10">
    <property type="entry name" value="Jelly Rolls"/>
    <property type="match status" value="1"/>
</dbReference>
<dbReference type="InterPro" id="IPR006045">
    <property type="entry name" value="Cupin_1"/>
</dbReference>
<dbReference type="InterPro" id="IPR001929">
    <property type="entry name" value="Germin"/>
</dbReference>
<dbReference type="InterPro" id="IPR019780">
    <property type="entry name" value="Germin_Mn-BS"/>
</dbReference>
<dbReference type="InterPro" id="IPR014710">
    <property type="entry name" value="RmlC-like_jellyroll"/>
</dbReference>
<dbReference type="InterPro" id="IPR011051">
    <property type="entry name" value="RmlC_Cupin_sf"/>
</dbReference>
<dbReference type="PANTHER" id="PTHR31238">
    <property type="entry name" value="GERMIN-LIKE PROTEIN SUBFAMILY 3 MEMBER 3"/>
    <property type="match status" value="1"/>
</dbReference>
<dbReference type="Pfam" id="PF00190">
    <property type="entry name" value="Cupin_1"/>
    <property type="match status" value="1"/>
</dbReference>
<dbReference type="PRINTS" id="PR00325">
    <property type="entry name" value="GERMIN"/>
</dbReference>
<dbReference type="SMART" id="SM00835">
    <property type="entry name" value="Cupin_1"/>
    <property type="match status" value="1"/>
</dbReference>
<dbReference type="SUPFAM" id="SSF51182">
    <property type="entry name" value="RmlC-like cupins"/>
    <property type="match status" value="1"/>
</dbReference>
<dbReference type="PROSITE" id="PS00725">
    <property type="entry name" value="GERMIN"/>
    <property type="match status" value="1"/>
</dbReference>
<feature type="signal peptide" evidence="2">
    <location>
        <begin position="1"/>
        <end position="26"/>
    </location>
</feature>
<feature type="chain" id="PRO_0000365504" description="Germin-like protein 3-3">
    <location>
        <begin position="27"/>
        <end position="227"/>
    </location>
</feature>
<feature type="domain" description="Cupin type-1" evidence="2">
    <location>
        <begin position="65"/>
        <end position="217"/>
    </location>
</feature>
<feature type="binding site" evidence="1">
    <location>
        <position position="114"/>
    </location>
    <ligand>
        <name>Mn(2+)</name>
        <dbReference type="ChEBI" id="CHEBI:29035"/>
    </ligand>
</feature>
<feature type="binding site" evidence="1">
    <location>
        <position position="116"/>
    </location>
    <ligand>
        <name>Mn(2+)</name>
        <dbReference type="ChEBI" id="CHEBI:29035"/>
    </ligand>
</feature>
<feature type="binding site" evidence="1">
    <location>
        <position position="121"/>
    </location>
    <ligand>
        <name>Mn(2+)</name>
        <dbReference type="ChEBI" id="CHEBI:29035"/>
    </ligand>
</feature>
<feature type="binding site" evidence="1">
    <location>
        <position position="163"/>
    </location>
    <ligand>
        <name>Mn(2+)</name>
        <dbReference type="ChEBI" id="CHEBI:29035"/>
    </ligand>
</feature>
<feature type="glycosylation site" description="N-linked (GlcNAc...) asparagine" evidence="2">
    <location>
        <position position="78"/>
    </location>
</feature>
<feature type="glycosylation site" description="N-linked (GlcNAc...) asparagine" evidence="2">
    <location>
        <position position="81"/>
    </location>
</feature>
<feature type="disulfide bond" evidence="1">
    <location>
        <begin position="36"/>
        <end position="51"/>
    </location>
</feature>
<protein>
    <recommendedName>
        <fullName>Germin-like protein 3-3</fullName>
    </recommendedName>
</protein>
<reference key="1">
    <citation type="journal article" date="2005" name="Genome Res.">
        <title>Sequence, annotation, and analysis of synteny between rice chromosome 3 and diverged grass species.</title>
        <authorList>
            <consortium name="The rice chromosome 3 sequencing consortium"/>
            <person name="Buell C.R."/>
            <person name="Yuan Q."/>
            <person name="Ouyang S."/>
            <person name="Liu J."/>
            <person name="Zhu W."/>
            <person name="Wang A."/>
            <person name="Maiti R."/>
            <person name="Haas B."/>
            <person name="Wortman J."/>
            <person name="Pertea M."/>
            <person name="Jones K.M."/>
            <person name="Kim M."/>
            <person name="Overton L."/>
            <person name="Tsitrin T."/>
            <person name="Fadrosh D."/>
            <person name="Bera J."/>
            <person name="Weaver B."/>
            <person name="Jin S."/>
            <person name="Johri S."/>
            <person name="Reardon M."/>
            <person name="Webb K."/>
            <person name="Hill J."/>
            <person name="Moffat K."/>
            <person name="Tallon L."/>
            <person name="Van Aken S."/>
            <person name="Lewis M."/>
            <person name="Utterback T."/>
            <person name="Feldblyum T."/>
            <person name="Zismann V."/>
            <person name="Iobst S."/>
            <person name="Hsiao J."/>
            <person name="de Vazeille A.R."/>
            <person name="Salzberg S.L."/>
            <person name="White O."/>
            <person name="Fraser C.M."/>
            <person name="Yu Y."/>
            <person name="Kim H."/>
            <person name="Rambo T."/>
            <person name="Currie J."/>
            <person name="Collura K."/>
            <person name="Kernodle-Thompson S."/>
            <person name="Wei F."/>
            <person name="Kudrna K."/>
            <person name="Ammiraju J.S.S."/>
            <person name="Luo M."/>
            <person name="Goicoechea J.L."/>
            <person name="Wing R.A."/>
            <person name="Henry D."/>
            <person name="Oates R."/>
            <person name="Palmer M."/>
            <person name="Pries G."/>
            <person name="Saski C."/>
            <person name="Simmons J."/>
            <person name="Soderlund C."/>
            <person name="Nelson W."/>
            <person name="de la Bastide M."/>
            <person name="Spiegel L."/>
            <person name="Nascimento L."/>
            <person name="Huang E."/>
            <person name="Preston R."/>
            <person name="Zutavern T."/>
            <person name="Palmer L."/>
            <person name="O'Shaughnessy A."/>
            <person name="Dike S."/>
            <person name="McCombie W.R."/>
            <person name="Minx P."/>
            <person name="Cordum H."/>
            <person name="Wilson R."/>
            <person name="Jin W."/>
            <person name="Lee H.R."/>
            <person name="Jiang J."/>
            <person name="Jackson S."/>
        </authorList>
    </citation>
    <scope>NUCLEOTIDE SEQUENCE [LARGE SCALE GENOMIC DNA]</scope>
    <source>
        <strain>cv. Nipponbare</strain>
    </source>
</reference>
<reference key="2">
    <citation type="journal article" date="2005" name="Nature">
        <title>The map-based sequence of the rice genome.</title>
        <authorList>
            <consortium name="International rice genome sequencing project (IRGSP)"/>
        </authorList>
    </citation>
    <scope>NUCLEOTIDE SEQUENCE [LARGE SCALE GENOMIC DNA]</scope>
    <source>
        <strain>cv. Nipponbare</strain>
    </source>
</reference>
<reference key="3">
    <citation type="journal article" date="2008" name="Nucleic Acids Res.">
        <title>The rice annotation project database (RAP-DB): 2008 update.</title>
        <authorList>
            <consortium name="The rice annotation project (RAP)"/>
        </authorList>
    </citation>
    <scope>GENOME REANNOTATION</scope>
    <source>
        <strain>cv. Nipponbare</strain>
    </source>
</reference>
<reference key="4">
    <citation type="journal article" date="2013" name="Rice">
        <title>Improvement of the Oryza sativa Nipponbare reference genome using next generation sequence and optical map data.</title>
        <authorList>
            <person name="Kawahara Y."/>
            <person name="de la Bastide M."/>
            <person name="Hamilton J.P."/>
            <person name="Kanamori H."/>
            <person name="McCombie W.R."/>
            <person name="Ouyang S."/>
            <person name="Schwartz D.C."/>
            <person name="Tanaka T."/>
            <person name="Wu J."/>
            <person name="Zhou S."/>
            <person name="Childs K.L."/>
            <person name="Davidson R.M."/>
            <person name="Lin H."/>
            <person name="Quesada-Ocampo L."/>
            <person name="Vaillancourt B."/>
            <person name="Sakai H."/>
            <person name="Lee S.S."/>
            <person name="Kim J."/>
            <person name="Numa H."/>
            <person name="Itoh T."/>
            <person name="Buell C.R."/>
            <person name="Matsumoto T."/>
        </authorList>
    </citation>
    <scope>GENOME REANNOTATION</scope>
    <source>
        <strain>cv. Nipponbare</strain>
    </source>
</reference>
<reference key="5">
    <citation type="journal article" date="2005" name="PLoS Biol.">
        <title>The genomes of Oryza sativa: a history of duplications.</title>
        <authorList>
            <person name="Yu J."/>
            <person name="Wang J."/>
            <person name="Lin W."/>
            <person name="Li S."/>
            <person name="Li H."/>
            <person name="Zhou J."/>
            <person name="Ni P."/>
            <person name="Dong W."/>
            <person name="Hu S."/>
            <person name="Zeng C."/>
            <person name="Zhang J."/>
            <person name="Zhang Y."/>
            <person name="Li R."/>
            <person name="Xu Z."/>
            <person name="Li S."/>
            <person name="Li X."/>
            <person name="Zheng H."/>
            <person name="Cong L."/>
            <person name="Lin L."/>
            <person name="Yin J."/>
            <person name="Geng J."/>
            <person name="Li G."/>
            <person name="Shi J."/>
            <person name="Liu J."/>
            <person name="Lv H."/>
            <person name="Li J."/>
            <person name="Wang J."/>
            <person name="Deng Y."/>
            <person name="Ran L."/>
            <person name="Shi X."/>
            <person name="Wang X."/>
            <person name="Wu Q."/>
            <person name="Li C."/>
            <person name="Ren X."/>
            <person name="Wang J."/>
            <person name="Wang X."/>
            <person name="Li D."/>
            <person name="Liu D."/>
            <person name="Zhang X."/>
            <person name="Ji Z."/>
            <person name="Zhao W."/>
            <person name="Sun Y."/>
            <person name="Zhang Z."/>
            <person name="Bao J."/>
            <person name="Han Y."/>
            <person name="Dong L."/>
            <person name="Ji J."/>
            <person name="Chen P."/>
            <person name="Wu S."/>
            <person name="Liu J."/>
            <person name="Xiao Y."/>
            <person name="Bu D."/>
            <person name="Tan J."/>
            <person name="Yang L."/>
            <person name="Ye C."/>
            <person name="Zhang J."/>
            <person name="Xu J."/>
            <person name="Zhou Y."/>
            <person name="Yu Y."/>
            <person name="Zhang B."/>
            <person name="Zhuang S."/>
            <person name="Wei H."/>
            <person name="Liu B."/>
            <person name="Lei M."/>
            <person name="Yu H."/>
            <person name="Li Y."/>
            <person name="Xu H."/>
            <person name="Wei S."/>
            <person name="He X."/>
            <person name="Fang L."/>
            <person name="Zhang Z."/>
            <person name="Zhang Y."/>
            <person name="Huang X."/>
            <person name="Su Z."/>
            <person name="Tong W."/>
            <person name="Li J."/>
            <person name="Tong Z."/>
            <person name="Li S."/>
            <person name="Ye J."/>
            <person name="Wang L."/>
            <person name="Fang L."/>
            <person name="Lei T."/>
            <person name="Chen C.-S."/>
            <person name="Chen H.-C."/>
            <person name="Xu Z."/>
            <person name="Li H."/>
            <person name="Huang H."/>
            <person name="Zhang F."/>
            <person name="Xu H."/>
            <person name="Li N."/>
            <person name="Zhao C."/>
            <person name="Li S."/>
            <person name="Dong L."/>
            <person name="Huang Y."/>
            <person name="Li L."/>
            <person name="Xi Y."/>
            <person name="Qi Q."/>
            <person name="Li W."/>
            <person name="Zhang B."/>
            <person name="Hu W."/>
            <person name="Zhang Y."/>
            <person name="Tian X."/>
            <person name="Jiao Y."/>
            <person name="Liang X."/>
            <person name="Jin J."/>
            <person name="Gao L."/>
            <person name="Zheng W."/>
            <person name="Hao B."/>
            <person name="Liu S.-M."/>
            <person name="Wang W."/>
            <person name="Yuan L."/>
            <person name="Cao M."/>
            <person name="McDermott J."/>
            <person name="Samudrala R."/>
            <person name="Wang J."/>
            <person name="Wong G.K.-S."/>
            <person name="Yang H."/>
        </authorList>
    </citation>
    <scope>NUCLEOTIDE SEQUENCE [LARGE SCALE GENOMIC DNA]</scope>
    <source>
        <strain>cv. Nipponbare</strain>
    </source>
</reference>
<reference key="6">
    <citation type="journal article" date="2003" name="Science">
        <title>Collection, mapping, and annotation of over 28,000 cDNA clones from japonica rice.</title>
        <authorList>
            <consortium name="The rice full-length cDNA consortium"/>
        </authorList>
    </citation>
    <scope>NUCLEOTIDE SEQUENCE [LARGE SCALE MRNA]</scope>
    <source>
        <strain>cv. Nipponbare</strain>
    </source>
</reference>
<reference key="7">
    <citation type="submission" date="2007-12" db="EMBL/GenBank/DDBJ databases">
        <title>Phylogenomic analysis of the rice monocupin gene family, including oxalate oxidases as candidate genes for quantitative resistance to rice blast.</title>
        <authorList>
            <person name="Carrillo M.G.C."/>
            <person name="Goodwin P.H."/>
            <person name="Leach J.E."/>
            <person name="Leung H."/>
            <person name="Vera Cruz C.M."/>
        </authorList>
    </citation>
    <scope>NUCLEOTIDE SEQUENCE [GENOMIC DNA] OF 1-224</scope>
    <source>
        <strain>cv. Nipponbare</strain>
    </source>
</reference>
<accession>Q851J8</accession>
<accession>A0A0P0W1Q0</accession>
<accession>B0G0U9</accession>
<gene>
    <name type="ordered locus">Os03g0693700</name>
    <name type="ordered locus">LOC_Os03g48750</name>
    <name type="ORF">OsJ_011704</name>
    <name type="ORF">OSJNBb0021O11.14</name>
</gene>
<keyword id="KW-0052">Apoplast</keyword>
<keyword id="KW-1015">Disulfide bond</keyword>
<keyword id="KW-0325">Glycoprotein</keyword>
<keyword id="KW-0464">Manganese</keyword>
<keyword id="KW-0479">Metal-binding</keyword>
<keyword id="KW-1185">Reference proteome</keyword>
<keyword id="KW-0964">Secreted</keyword>
<keyword id="KW-0732">Signal</keyword>
<comment type="function">
    <text>May play a role in plant defense. Probably has no oxalate oxidase activity even if the active site is conserved.</text>
</comment>
<comment type="subunit">
    <text evidence="1">Oligomer (believed to be a pentamer but probably hexamer).</text>
</comment>
<comment type="subcellular location">
    <subcellularLocation>
        <location evidence="1">Secreted</location>
        <location evidence="1">Extracellular space</location>
        <location evidence="1">Apoplast</location>
    </subcellularLocation>
</comment>
<comment type="similarity">
    <text evidence="3">Belongs to the germin family.</text>
</comment>
<name>GL33_ORYSJ</name>
<proteinExistence type="evidence at transcript level"/>
<sequence>MECFKTTLAGVVLVVLLLQQAPVLRANDPDPLQDFCVADLDSEVTLNGYPCKPTPAAGDEFLFSSRLATGGDVNANPNGSNVTQLDVAGWPGVNTLGVSMNRIDFAPGGTNPPHVHPRATEVGIVLRGELLVGIIGSLDTGNRYYSRVVRGGETFVIPRGLMHFQFNVGKTEATMVVSFNSQNPGIVFVPLTLFGSNPPIPTPVLVKALRVDAGVVELLKSKFTGGY</sequence>
<organism>
    <name type="scientific">Oryza sativa subsp. japonica</name>
    <name type="common">Rice</name>
    <dbReference type="NCBI Taxonomy" id="39947"/>
    <lineage>
        <taxon>Eukaryota</taxon>
        <taxon>Viridiplantae</taxon>
        <taxon>Streptophyta</taxon>
        <taxon>Embryophyta</taxon>
        <taxon>Tracheophyta</taxon>
        <taxon>Spermatophyta</taxon>
        <taxon>Magnoliopsida</taxon>
        <taxon>Liliopsida</taxon>
        <taxon>Poales</taxon>
        <taxon>Poaceae</taxon>
        <taxon>BOP clade</taxon>
        <taxon>Oryzoideae</taxon>
        <taxon>Oryzeae</taxon>
        <taxon>Oryzinae</taxon>
        <taxon>Oryza</taxon>
        <taxon>Oryza sativa</taxon>
    </lineage>
</organism>